<comment type="function">
    <text evidence="1">The RuvA-RuvB-RuvC complex processes Holliday junction (HJ) DNA during genetic recombination and DNA repair, while the RuvA-RuvB complex plays an important role in the rescue of blocked DNA replication forks via replication fork reversal (RFR). RuvA specifically binds to HJ cruciform DNA, conferring on it an open structure. The RuvB hexamer acts as an ATP-dependent pump, pulling dsDNA into and through the RuvAB complex. RuvB forms 2 homohexamers on either side of HJ DNA bound by 1 or 2 RuvA tetramers; 4 subunits per hexamer contact DNA at a time. Coordinated motions by a converter formed by DNA-disengaged RuvB subunits stimulates ATP hydrolysis and nucleotide exchange. Immobilization of the converter enables RuvB to convert the ATP-contained energy into a lever motion, pulling 2 nucleotides of DNA out of the RuvA tetramer per ATP hydrolyzed, thus driving DNA branch migration. The RuvB motors rotate together with the DNA substrate, which together with the progressing nucleotide cycle form the mechanistic basis for DNA recombination by continuous HJ branch migration. Branch migration allows RuvC to scan DNA until it finds its consensus sequence, where it cleaves and resolves cruciform DNA.</text>
</comment>
<comment type="catalytic activity">
    <reaction evidence="1">
        <text>ATP + H2O = ADP + phosphate + H(+)</text>
        <dbReference type="Rhea" id="RHEA:13065"/>
        <dbReference type="ChEBI" id="CHEBI:15377"/>
        <dbReference type="ChEBI" id="CHEBI:15378"/>
        <dbReference type="ChEBI" id="CHEBI:30616"/>
        <dbReference type="ChEBI" id="CHEBI:43474"/>
        <dbReference type="ChEBI" id="CHEBI:456216"/>
    </reaction>
</comment>
<comment type="subunit">
    <text evidence="1">Homohexamer. Forms an RuvA(8)-RuvB(12)-Holliday junction (HJ) complex. HJ DNA is sandwiched between 2 RuvA tetramers; dsDNA enters through RuvA and exits via RuvB. An RuvB hexamer assembles on each DNA strand where it exits the tetramer. Each RuvB hexamer is contacted by two RuvA subunits (via domain III) on 2 adjacent RuvB subunits; this complex drives branch migration. In the full resolvosome a probable DNA-RuvA(4)-RuvB(12)-RuvC(2) complex forms which resolves the HJ.</text>
</comment>
<comment type="subcellular location">
    <subcellularLocation>
        <location evidence="1">Cytoplasm</location>
    </subcellularLocation>
</comment>
<comment type="domain">
    <text evidence="1">Has 3 domains, the large (RuvB-L) and small ATPase (RuvB-S) domains and the C-terminal head (RuvB-H) domain. The head domain binds DNA, while the ATPase domains jointly bind ATP, ADP or are empty depending on the state of the subunit in the translocation cycle. During a single DNA translocation step the structure of each domain remains the same, but their relative positions change.</text>
</comment>
<comment type="similarity">
    <text evidence="1">Belongs to the RuvB family.</text>
</comment>
<keyword id="KW-0067">ATP-binding</keyword>
<keyword id="KW-0963">Cytoplasm</keyword>
<keyword id="KW-0227">DNA damage</keyword>
<keyword id="KW-0233">DNA recombination</keyword>
<keyword id="KW-0234">DNA repair</keyword>
<keyword id="KW-0238">DNA-binding</keyword>
<keyword id="KW-0378">Hydrolase</keyword>
<keyword id="KW-0547">Nucleotide-binding</keyword>
<feature type="chain" id="PRO_0000235426" description="Holliday junction branch migration complex subunit RuvB">
    <location>
        <begin position="1"/>
        <end position="340"/>
    </location>
</feature>
<feature type="region of interest" description="Large ATPase domain (RuvB-L)" evidence="1">
    <location>
        <begin position="4"/>
        <end position="184"/>
    </location>
</feature>
<feature type="region of interest" description="Small ATPAse domain (RuvB-S)" evidence="1">
    <location>
        <begin position="185"/>
        <end position="255"/>
    </location>
</feature>
<feature type="region of interest" description="Head domain (RuvB-H)" evidence="1">
    <location>
        <begin position="258"/>
        <end position="340"/>
    </location>
</feature>
<feature type="binding site" evidence="1">
    <location>
        <position position="24"/>
    </location>
    <ligand>
        <name>ATP</name>
        <dbReference type="ChEBI" id="CHEBI:30616"/>
    </ligand>
</feature>
<feature type="binding site" evidence="1">
    <location>
        <position position="65"/>
    </location>
    <ligand>
        <name>ATP</name>
        <dbReference type="ChEBI" id="CHEBI:30616"/>
    </ligand>
</feature>
<feature type="binding site" evidence="1">
    <location>
        <position position="68"/>
    </location>
    <ligand>
        <name>ATP</name>
        <dbReference type="ChEBI" id="CHEBI:30616"/>
    </ligand>
</feature>
<feature type="binding site" evidence="1">
    <location>
        <position position="69"/>
    </location>
    <ligand>
        <name>ATP</name>
        <dbReference type="ChEBI" id="CHEBI:30616"/>
    </ligand>
</feature>
<feature type="binding site" evidence="1">
    <location>
        <position position="69"/>
    </location>
    <ligand>
        <name>Mg(2+)</name>
        <dbReference type="ChEBI" id="CHEBI:18420"/>
    </ligand>
</feature>
<feature type="binding site" evidence="1">
    <location>
        <position position="70"/>
    </location>
    <ligand>
        <name>ATP</name>
        <dbReference type="ChEBI" id="CHEBI:30616"/>
    </ligand>
</feature>
<feature type="binding site" evidence="1">
    <location>
        <begin position="131"/>
        <end position="133"/>
    </location>
    <ligand>
        <name>ATP</name>
        <dbReference type="ChEBI" id="CHEBI:30616"/>
    </ligand>
</feature>
<feature type="binding site" evidence="1">
    <location>
        <position position="174"/>
    </location>
    <ligand>
        <name>ATP</name>
        <dbReference type="ChEBI" id="CHEBI:30616"/>
    </ligand>
</feature>
<feature type="binding site" evidence="1">
    <location>
        <position position="184"/>
    </location>
    <ligand>
        <name>ATP</name>
        <dbReference type="ChEBI" id="CHEBI:30616"/>
    </ligand>
</feature>
<feature type="binding site" evidence="1">
    <location>
        <position position="221"/>
    </location>
    <ligand>
        <name>ATP</name>
        <dbReference type="ChEBI" id="CHEBI:30616"/>
    </ligand>
</feature>
<feature type="binding site" evidence="1">
    <location>
        <position position="294"/>
    </location>
    <ligand>
        <name>DNA</name>
        <dbReference type="ChEBI" id="CHEBI:16991"/>
    </ligand>
</feature>
<feature type="binding site" evidence="1">
    <location>
        <position position="313"/>
    </location>
    <ligand>
        <name>DNA</name>
        <dbReference type="ChEBI" id="CHEBI:16991"/>
    </ligand>
</feature>
<feature type="binding site" evidence="1">
    <location>
        <position position="318"/>
    </location>
    <ligand>
        <name>DNA</name>
        <dbReference type="ChEBI" id="CHEBI:16991"/>
    </ligand>
</feature>
<sequence length="340" mass="37773">MIETDRIVGGQSLEEDMYVQPTVRPQIITDYIGQQAVREQLQLSINAAKMRQEHLDHVLLYGPPGLGKTTLSNIIAQEMGVTLRQTSGPVIEKPGDLAAILTRLEPHDVLFVDEIHRLSPIVEEVLYPAMEDFQIDIIIGEGPAAQSVKIDIPPFTLVGATTRAGLLTSPLRDRFGIVQRLEFYSIEELAQIVTRSANILGLSAEPDGALEIARRSRGTPRIANRLLRRVRDYAQVKGNGVITAEIADLALNLLEVDPLGLDKMDRRLLELLIQKFESRPVGIDSISAALGEERGTIEDVIEPFLVQQGFLIRTPRGRVVTQTAYRHLGLTMPERNLEDE</sequence>
<protein>
    <recommendedName>
        <fullName evidence="1">Holliday junction branch migration complex subunit RuvB</fullName>
        <ecNumber evidence="1">3.6.4.-</ecNumber>
    </recommendedName>
</protein>
<reference key="1">
    <citation type="journal article" date="2006" name="PLoS Biol.">
        <title>The genome of deep-sea vent chemolithoautotroph Thiomicrospira crunogena XCL-2.</title>
        <authorList>
            <person name="Scott K.M."/>
            <person name="Sievert S.M."/>
            <person name="Abril F.N."/>
            <person name="Ball L.A."/>
            <person name="Barrett C.J."/>
            <person name="Blake R.A."/>
            <person name="Boller A.J."/>
            <person name="Chain P.S.G."/>
            <person name="Clark J.A."/>
            <person name="Davis C.R."/>
            <person name="Detter C."/>
            <person name="Do K.F."/>
            <person name="Dobrinski K.P."/>
            <person name="Faza B.I."/>
            <person name="Fitzpatrick K.A."/>
            <person name="Freyermuth S.K."/>
            <person name="Harmer T.L."/>
            <person name="Hauser L.J."/>
            <person name="Huegler M."/>
            <person name="Kerfeld C.A."/>
            <person name="Klotz M.G."/>
            <person name="Kong W.W."/>
            <person name="Land M."/>
            <person name="Lapidus A."/>
            <person name="Larimer F.W."/>
            <person name="Longo D.L."/>
            <person name="Lucas S."/>
            <person name="Malfatti S.A."/>
            <person name="Massey S.E."/>
            <person name="Martin D.D."/>
            <person name="McCuddin Z."/>
            <person name="Meyer F."/>
            <person name="Moore J.L."/>
            <person name="Ocampo L.H. Jr."/>
            <person name="Paul J.H."/>
            <person name="Paulsen I.T."/>
            <person name="Reep D.K."/>
            <person name="Ren Q."/>
            <person name="Ross R.L."/>
            <person name="Sato P.Y."/>
            <person name="Thomas P."/>
            <person name="Tinkham L.E."/>
            <person name="Zeruth G.T."/>
        </authorList>
    </citation>
    <scope>NUCLEOTIDE SEQUENCE [LARGE SCALE GENOMIC DNA]</scope>
    <source>
        <strain>DSM 25203 / XCL-2</strain>
    </source>
</reference>
<accession>Q31H83</accession>
<evidence type="ECO:0000255" key="1">
    <source>
        <dbReference type="HAMAP-Rule" id="MF_00016"/>
    </source>
</evidence>
<name>RUVB_HYDCU</name>
<proteinExistence type="inferred from homology"/>
<gene>
    <name evidence="1" type="primary">ruvB</name>
    <name type="ordered locus">Tcr_0894</name>
</gene>
<organism>
    <name type="scientific">Hydrogenovibrio crunogenus (strain DSM 25203 / XCL-2)</name>
    <name type="common">Thiomicrospira crunogena</name>
    <dbReference type="NCBI Taxonomy" id="317025"/>
    <lineage>
        <taxon>Bacteria</taxon>
        <taxon>Pseudomonadati</taxon>
        <taxon>Pseudomonadota</taxon>
        <taxon>Gammaproteobacteria</taxon>
        <taxon>Thiotrichales</taxon>
        <taxon>Piscirickettsiaceae</taxon>
        <taxon>Hydrogenovibrio</taxon>
    </lineage>
</organism>
<dbReference type="EC" id="3.6.4.-" evidence="1"/>
<dbReference type="EMBL" id="CP000109">
    <property type="protein sequence ID" value="ABB41490.1"/>
    <property type="molecule type" value="Genomic_DNA"/>
</dbReference>
<dbReference type="SMR" id="Q31H83"/>
<dbReference type="STRING" id="317025.Tcr_0894"/>
<dbReference type="KEGG" id="tcx:Tcr_0894"/>
<dbReference type="eggNOG" id="COG2255">
    <property type="taxonomic scope" value="Bacteria"/>
</dbReference>
<dbReference type="HOGENOM" id="CLU_055599_1_0_6"/>
<dbReference type="OrthoDB" id="9804478at2"/>
<dbReference type="GO" id="GO:0005737">
    <property type="term" value="C:cytoplasm"/>
    <property type="evidence" value="ECO:0007669"/>
    <property type="project" value="UniProtKB-SubCell"/>
</dbReference>
<dbReference type="GO" id="GO:0048476">
    <property type="term" value="C:Holliday junction resolvase complex"/>
    <property type="evidence" value="ECO:0007669"/>
    <property type="project" value="UniProtKB-UniRule"/>
</dbReference>
<dbReference type="GO" id="GO:0005524">
    <property type="term" value="F:ATP binding"/>
    <property type="evidence" value="ECO:0007669"/>
    <property type="project" value="UniProtKB-UniRule"/>
</dbReference>
<dbReference type="GO" id="GO:0016887">
    <property type="term" value="F:ATP hydrolysis activity"/>
    <property type="evidence" value="ECO:0007669"/>
    <property type="project" value="InterPro"/>
</dbReference>
<dbReference type="GO" id="GO:0000400">
    <property type="term" value="F:four-way junction DNA binding"/>
    <property type="evidence" value="ECO:0007669"/>
    <property type="project" value="UniProtKB-UniRule"/>
</dbReference>
<dbReference type="GO" id="GO:0009378">
    <property type="term" value="F:four-way junction helicase activity"/>
    <property type="evidence" value="ECO:0007669"/>
    <property type="project" value="InterPro"/>
</dbReference>
<dbReference type="GO" id="GO:0006310">
    <property type="term" value="P:DNA recombination"/>
    <property type="evidence" value="ECO:0007669"/>
    <property type="project" value="UniProtKB-UniRule"/>
</dbReference>
<dbReference type="GO" id="GO:0006281">
    <property type="term" value="P:DNA repair"/>
    <property type="evidence" value="ECO:0007669"/>
    <property type="project" value="UniProtKB-UniRule"/>
</dbReference>
<dbReference type="CDD" id="cd00009">
    <property type="entry name" value="AAA"/>
    <property type="match status" value="1"/>
</dbReference>
<dbReference type="FunFam" id="1.10.8.60:FF:000023">
    <property type="entry name" value="Holliday junction ATP-dependent DNA helicase RuvB"/>
    <property type="match status" value="1"/>
</dbReference>
<dbReference type="FunFam" id="3.40.50.300:FF:000073">
    <property type="entry name" value="Holliday junction ATP-dependent DNA helicase RuvB"/>
    <property type="match status" value="1"/>
</dbReference>
<dbReference type="Gene3D" id="1.10.8.60">
    <property type="match status" value="1"/>
</dbReference>
<dbReference type="Gene3D" id="3.40.50.300">
    <property type="entry name" value="P-loop containing nucleotide triphosphate hydrolases"/>
    <property type="match status" value="1"/>
</dbReference>
<dbReference type="Gene3D" id="1.10.10.10">
    <property type="entry name" value="Winged helix-like DNA-binding domain superfamily/Winged helix DNA-binding domain"/>
    <property type="match status" value="1"/>
</dbReference>
<dbReference type="HAMAP" id="MF_00016">
    <property type="entry name" value="DNA_HJ_migration_RuvB"/>
    <property type="match status" value="1"/>
</dbReference>
<dbReference type="InterPro" id="IPR003593">
    <property type="entry name" value="AAA+_ATPase"/>
</dbReference>
<dbReference type="InterPro" id="IPR041445">
    <property type="entry name" value="AAA_lid_4"/>
</dbReference>
<dbReference type="InterPro" id="IPR004605">
    <property type="entry name" value="DNA_helicase_Holl-junc_RuvB"/>
</dbReference>
<dbReference type="InterPro" id="IPR027417">
    <property type="entry name" value="P-loop_NTPase"/>
</dbReference>
<dbReference type="InterPro" id="IPR008824">
    <property type="entry name" value="RuvB-like_N"/>
</dbReference>
<dbReference type="InterPro" id="IPR008823">
    <property type="entry name" value="RuvB_C"/>
</dbReference>
<dbReference type="InterPro" id="IPR036388">
    <property type="entry name" value="WH-like_DNA-bd_sf"/>
</dbReference>
<dbReference type="InterPro" id="IPR036390">
    <property type="entry name" value="WH_DNA-bd_sf"/>
</dbReference>
<dbReference type="NCBIfam" id="NF000868">
    <property type="entry name" value="PRK00080.1"/>
    <property type="match status" value="1"/>
</dbReference>
<dbReference type="NCBIfam" id="TIGR00635">
    <property type="entry name" value="ruvB"/>
    <property type="match status" value="1"/>
</dbReference>
<dbReference type="PANTHER" id="PTHR42848">
    <property type="match status" value="1"/>
</dbReference>
<dbReference type="PANTHER" id="PTHR42848:SF1">
    <property type="entry name" value="HOLLIDAY JUNCTION BRANCH MIGRATION COMPLEX SUBUNIT RUVB"/>
    <property type="match status" value="1"/>
</dbReference>
<dbReference type="Pfam" id="PF17864">
    <property type="entry name" value="AAA_lid_4"/>
    <property type="match status" value="1"/>
</dbReference>
<dbReference type="Pfam" id="PF05491">
    <property type="entry name" value="RuvB_C"/>
    <property type="match status" value="1"/>
</dbReference>
<dbReference type="Pfam" id="PF05496">
    <property type="entry name" value="RuvB_N"/>
    <property type="match status" value="1"/>
</dbReference>
<dbReference type="SMART" id="SM00382">
    <property type="entry name" value="AAA"/>
    <property type="match status" value="1"/>
</dbReference>
<dbReference type="SUPFAM" id="SSF52540">
    <property type="entry name" value="P-loop containing nucleoside triphosphate hydrolases"/>
    <property type="match status" value="1"/>
</dbReference>
<dbReference type="SUPFAM" id="SSF46785">
    <property type="entry name" value="Winged helix' DNA-binding domain"/>
    <property type="match status" value="1"/>
</dbReference>